<proteinExistence type="inferred from homology"/>
<feature type="chain" id="PRO_1000075585" description="Methionine--tRNA ligase">
    <location>
        <begin position="1"/>
        <end position="683"/>
    </location>
</feature>
<feature type="domain" description="tRNA-binding" evidence="1">
    <location>
        <begin position="581"/>
        <end position="683"/>
    </location>
</feature>
<feature type="short sequence motif" description="'HIGH' region">
    <location>
        <begin position="15"/>
        <end position="25"/>
    </location>
</feature>
<feature type="short sequence motif" description="'KMSKS' region">
    <location>
        <begin position="332"/>
        <end position="336"/>
    </location>
</feature>
<feature type="binding site" evidence="1">
    <location>
        <position position="146"/>
    </location>
    <ligand>
        <name>Zn(2+)</name>
        <dbReference type="ChEBI" id="CHEBI:29105"/>
    </ligand>
</feature>
<feature type="binding site" evidence="1">
    <location>
        <position position="149"/>
    </location>
    <ligand>
        <name>Zn(2+)</name>
        <dbReference type="ChEBI" id="CHEBI:29105"/>
    </ligand>
</feature>
<feature type="binding site" evidence="1">
    <location>
        <position position="159"/>
    </location>
    <ligand>
        <name>Zn(2+)</name>
        <dbReference type="ChEBI" id="CHEBI:29105"/>
    </ligand>
</feature>
<feature type="binding site" evidence="1">
    <location>
        <position position="162"/>
    </location>
    <ligand>
        <name>Zn(2+)</name>
        <dbReference type="ChEBI" id="CHEBI:29105"/>
    </ligand>
</feature>
<feature type="binding site" evidence="1">
    <location>
        <position position="335"/>
    </location>
    <ligand>
        <name>ATP</name>
        <dbReference type="ChEBI" id="CHEBI:30616"/>
    </ligand>
</feature>
<dbReference type="EC" id="6.1.1.10" evidence="1"/>
<dbReference type="EMBL" id="CP000947">
    <property type="protein sequence ID" value="ACA31358.1"/>
    <property type="molecule type" value="Genomic_DNA"/>
</dbReference>
<dbReference type="RefSeq" id="WP_012340730.1">
    <property type="nucleotide sequence ID" value="NC_010519.1"/>
</dbReference>
<dbReference type="SMR" id="B0UV72"/>
<dbReference type="STRING" id="228400.HSM_1596"/>
<dbReference type="GeneID" id="31487899"/>
<dbReference type="KEGG" id="hsm:HSM_1596"/>
<dbReference type="HOGENOM" id="CLU_009710_7_0_6"/>
<dbReference type="GO" id="GO:0005829">
    <property type="term" value="C:cytosol"/>
    <property type="evidence" value="ECO:0007669"/>
    <property type="project" value="TreeGrafter"/>
</dbReference>
<dbReference type="GO" id="GO:0005524">
    <property type="term" value="F:ATP binding"/>
    <property type="evidence" value="ECO:0007669"/>
    <property type="project" value="UniProtKB-UniRule"/>
</dbReference>
<dbReference type="GO" id="GO:0046872">
    <property type="term" value="F:metal ion binding"/>
    <property type="evidence" value="ECO:0007669"/>
    <property type="project" value="UniProtKB-KW"/>
</dbReference>
<dbReference type="GO" id="GO:0004825">
    <property type="term" value="F:methionine-tRNA ligase activity"/>
    <property type="evidence" value="ECO:0007669"/>
    <property type="project" value="UniProtKB-UniRule"/>
</dbReference>
<dbReference type="GO" id="GO:0000049">
    <property type="term" value="F:tRNA binding"/>
    <property type="evidence" value="ECO:0007669"/>
    <property type="project" value="UniProtKB-KW"/>
</dbReference>
<dbReference type="GO" id="GO:0006431">
    <property type="term" value="P:methionyl-tRNA aminoacylation"/>
    <property type="evidence" value="ECO:0007669"/>
    <property type="project" value="UniProtKB-UniRule"/>
</dbReference>
<dbReference type="CDD" id="cd07957">
    <property type="entry name" value="Anticodon_Ia_Met"/>
    <property type="match status" value="1"/>
</dbReference>
<dbReference type="CDD" id="cd00814">
    <property type="entry name" value="MetRS_core"/>
    <property type="match status" value="1"/>
</dbReference>
<dbReference type="CDD" id="cd02800">
    <property type="entry name" value="tRNA_bind_EcMetRS_like"/>
    <property type="match status" value="1"/>
</dbReference>
<dbReference type="FunFam" id="1.10.730.10:FF:000005">
    <property type="entry name" value="Methionine--tRNA ligase"/>
    <property type="match status" value="1"/>
</dbReference>
<dbReference type="FunFam" id="2.20.28.20:FF:000001">
    <property type="entry name" value="Methionine--tRNA ligase"/>
    <property type="match status" value="1"/>
</dbReference>
<dbReference type="FunFam" id="2.40.50.140:FF:000042">
    <property type="entry name" value="Methionine--tRNA ligase"/>
    <property type="match status" value="1"/>
</dbReference>
<dbReference type="Gene3D" id="3.40.50.620">
    <property type="entry name" value="HUPs"/>
    <property type="match status" value="1"/>
</dbReference>
<dbReference type="Gene3D" id="1.10.730.10">
    <property type="entry name" value="Isoleucyl-tRNA Synthetase, Domain 1"/>
    <property type="match status" value="1"/>
</dbReference>
<dbReference type="Gene3D" id="2.20.28.20">
    <property type="entry name" value="Methionyl-tRNA synthetase, Zn-domain"/>
    <property type="match status" value="1"/>
</dbReference>
<dbReference type="Gene3D" id="2.40.50.140">
    <property type="entry name" value="Nucleic acid-binding proteins"/>
    <property type="match status" value="1"/>
</dbReference>
<dbReference type="HAMAP" id="MF_00098">
    <property type="entry name" value="Met_tRNA_synth_type1"/>
    <property type="match status" value="1"/>
</dbReference>
<dbReference type="InterPro" id="IPR001412">
    <property type="entry name" value="aa-tRNA-synth_I_CS"/>
</dbReference>
<dbReference type="InterPro" id="IPR041872">
    <property type="entry name" value="Anticodon_Met"/>
</dbReference>
<dbReference type="InterPro" id="IPR004495">
    <property type="entry name" value="Met-tRNA-synth_bsu_C"/>
</dbReference>
<dbReference type="InterPro" id="IPR023458">
    <property type="entry name" value="Met-tRNA_ligase_1"/>
</dbReference>
<dbReference type="InterPro" id="IPR014758">
    <property type="entry name" value="Met-tRNA_synth"/>
</dbReference>
<dbReference type="InterPro" id="IPR015413">
    <property type="entry name" value="Methionyl/Leucyl_tRNA_Synth"/>
</dbReference>
<dbReference type="InterPro" id="IPR033911">
    <property type="entry name" value="MetRS_core"/>
</dbReference>
<dbReference type="InterPro" id="IPR029038">
    <property type="entry name" value="MetRS_Zn"/>
</dbReference>
<dbReference type="InterPro" id="IPR012340">
    <property type="entry name" value="NA-bd_OB-fold"/>
</dbReference>
<dbReference type="InterPro" id="IPR014729">
    <property type="entry name" value="Rossmann-like_a/b/a_fold"/>
</dbReference>
<dbReference type="InterPro" id="IPR002547">
    <property type="entry name" value="tRNA-bd_dom"/>
</dbReference>
<dbReference type="InterPro" id="IPR009080">
    <property type="entry name" value="tRNAsynth_Ia_anticodon-bd"/>
</dbReference>
<dbReference type="NCBIfam" id="TIGR00398">
    <property type="entry name" value="metG"/>
    <property type="match status" value="1"/>
</dbReference>
<dbReference type="NCBIfam" id="TIGR00399">
    <property type="entry name" value="metG_C_term"/>
    <property type="match status" value="1"/>
</dbReference>
<dbReference type="NCBIfam" id="NF001100">
    <property type="entry name" value="PRK00133.1"/>
    <property type="match status" value="1"/>
</dbReference>
<dbReference type="PANTHER" id="PTHR45765">
    <property type="entry name" value="METHIONINE--TRNA LIGASE"/>
    <property type="match status" value="1"/>
</dbReference>
<dbReference type="PANTHER" id="PTHR45765:SF1">
    <property type="entry name" value="METHIONINE--TRNA LIGASE, CYTOPLASMIC"/>
    <property type="match status" value="1"/>
</dbReference>
<dbReference type="Pfam" id="PF19303">
    <property type="entry name" value="Anticodon_3"/>
    <property type="match status" value="1"/>
</dbReference>
<dbReference type="Pfam" id="PF09334">
    <property type="entry name" value="tRNA-synt_1g"/>
    <property type="match status" value="1"/>
</dbReference>
<dbReference type="Pfam" id="PF01588">
    <property type="entry name" value="tRNA_bind"/>
    <property type="match status" value="1"/>
</dbReference>
<dbReference type="PRINTS" id="PR01041">
    <property type="entry name" value="TRNASYNTHMET"/>
</dbReference>
<dbReference type="SUPFAM" id="SSF47323">
    <property type="entry name" value="Anticodon-binding domain of a subclass of class I aminoacyl-tRNA synthetases"/>
    <property type="match status" value="1"/>
</dbReference>
<dbReference type="SUPFAM" id="SSF57770">
    <property type="entry name" value="Methionyl-tRNA synthetase (MetRS), Zn-domain"/>
    <property type="match status" value="1"/>
</dbReference>
<dbReference type="SUPFAM" id="SSF50249">
    <property type="entry name" value="Nucleic acid-binding proteins"/>
    <property type="match status" value="1"/>
</dbReference>
<dbReference type="SUPFAM" id="SSF52374">
    <property type="entry name" value="Nucleotidylyl transferase"/>
    <property type="match status" value="1"/>
</dbReference>
<dbReference type="PROSITE" id="PS00178">
    <property type="entry name" value="AA_TRNA_LIGASE_I"/>
    <property type="match status" value="1"/>
</dbReference>
<dbReference type="PROSITE" id="PS50886">
    <property type="entry name" value="TRBD"/>
    <property type="match status" value="1"/>
</dbReference>
<sequence length="683" mass="77477">MSTNSRQILVTCALPYANGPIHLGHMLEHIQADIWVRFQRMRGNEIYFVCADDAHGTPIMLKADQMGVKPEQLIADVQQKHMADFNGFNISFDNYHSTHSDENRELVEAIYHKLTQNGFIKTRTISQLFDPEKAMFLPDRFVKGTCPKCKAEDQYGDNCEVCSATYSPIELISPRSTVSGATPVLKESEHFFFDLPAFGAMLTEWIRSGSLQQEVANKMQEWFEAGLQQWDISRDAPYFGFKIPNTDNKYFYVWLDAPIGYMASFKNLCGKKSGIDFDSFWSKESHAELYHFIGKDIMYFHSLFWPAMLDGASLRKPNNIFVHGYVTVNGEKMSKSRGTFIQAATYLKYLDPECLRYYYAAKLGSRIDDLDLNLDDFVQRVNTDLVNKLVNLASRNASFIQKRFDGKLANKLDDKMLFDEFIAQSELIADYYENREFGKAIREIMALTDKANKYVDEKAPWVIAKDESRTDELQQVCSMGIELFRVLIGYLKPVLPNLAARAEAFLNTQLTWENVASPLLDHQIAPFKPLFSRLDMKKIEEMIEASKIENAKANQTAGKSAVENKAFSEFEPIEESITIDDFCKVDLRVAKVLKCEAVPESNKLLKFILDIGNETRQVFSGIKAAYGKPEDLEGRFVIMVANLAPRKMKFGMSEGMILSAGNGGADLYLLDVDAGAKAGQRVK</sequence>
<reference key="1">
    <citation type="submission" date="2008-02" db="EMBL/GenBank/DDBJ databases">
        <title>Complete sequence of Haemophilus somnus 2336.</title>
        <authorList>
            <consortium name="US DOE Joint Genome Institute"/>
            <person name="Siddaramappa S."/>
            <person name="Duncan A.J."/>
            <person name="Challacombe J.F."/>
            <person name="Rainey D."/>
            <person name="Gillaspy A.F."/>
            <person name="Carson M."/>
            <person name="Gipson J."/>
            <person name="Gipson M."/>
            <person name="Bruce D."/>
            <person name="Detter J.C."/>
            <person name="Han C.S."/>
            <person name="Land M."/>
            <person name="Tapia R."/>
            <person name="Thompson L.S."/>
            <person name="Orvis J."/>
            <person name="Zaitshik J."/>
            <person name="Barnes G."/>
            <person name="Brettin T.S."/>
            <person name="Dyer D.W."/>
            <person name="Inzana T.J."/>
        </authorList>
    </citation>
    <scope>NUCLEOTIDE SEQUENCE [LARGE SCALE GENOMIC DNA]</scope>
    <source>
        <strain>2336</strain>
    </source>
</reference>
<name>SYM_HISS2</name>
<accession>B0UV72</accession>
<comment type="function">
    <text evidence="1">Is required not only for elongation of protein synthesis but also for the initiation of all mRNA translation through initiator tRNA(fMet) aminoacylation.</text>
</comment>
<comment type="catalytic activity">
    <reaction evidence="1">
        <text>tRNA(Met) + L-methionine + ATP = L-methionyl-tRNA(Met) + AMP + diphosphate</text>
        <dbReference type="Rhea" id="RHEA:13481"/>
        <dbReference type="Rhea" id="RHEA-COMP:9667"/>
        <dbReference type="Rhea" id="RHEA-COMP:9698"/>
        <dbReference type="ChEBI" id="CHEBI:30616"/>
        <dbReference type="ChEBI" id="CHEBI:33019"/>
        <dbReference type="ChEBI" id="CHEBI:57844"/>
        <dbReference type="ChEBI" id="CHEBI:78442"/>
        <dbReference type="ChEBI" id="CHEBI:78530"/>
        <dbReference type="ChEBI" id="CHEBI:456215"/>
        <dbReference type="EC" id="6.1.1.10"/>
    </reaction>
</comment>
<comment type="cofactor">
    <cofactor evidence="1">
        <name>Zn(2+)</name>
        <dbReference type="ChEBI" id="CHEBI:29105"/>
    </cofactor>
    <text evidence="1">Binds 1 zinc ion per subunit.</text>
</comment>
<comment type="subunit">
    <text evidence="1">Homodimer.</text>
</comment>
<comment type="subcellular location">
    <subcellularLocation>
        <location evidence="1">Cytoplasm</location>
    </subcellularLocation>
</comment>
<comment type="similarity">
    <text evidence="1">Belongs to the class-I aminoacyl-tRNA synthetase family. MetG type 1 subfamily.</text>
</comment>
<protein>
    <recommendedName>
        <fullName evidence="1">Methionine--tRNA ligase</fullName>
        <ecNumber evidence="1">6.1.1.10</ecNumber>
    </recommendedName>
    <alternativeName>
        <fullName evidence="1">Methionyl-tRNA synthetase</fullName>
        <shortName evidence="1">MetRS</shortName>
    </alternativeName>
</protein>
<gene>
    <name evidence="1" type="primary">metG</name>
    <name type="ordered locus">HSM_1596</name>
</gene>
<organism>
    <name type="scientific">Histophilus somni (strain 2336)</name>
    <name type="common">Haemophilus somnus</name>
    <dbReference type="NCBI Taxonomy" id="228400"/>
    <lineage>
        <taxon>Bacteria</taxon>
        <taxon>Pseudomonadati</taxon>
        <taxon>Pseudomonadota</taxon>
        <taxon>Gammaproteobacteria</taxon>
        <taxon>Pasteurellales</taxon>
        <taxon>Pasteurellaceae</taxon>
        <taxon>Histophilus</taxon>
    </lineage>
</organism>
<evidence type="ECO:0000255" key="1">
    <source>
        <dbReference type="HAMAP-Rule" id="MF_00098"/>
    </source>
</evidence>
<keyword id="KW-0030">Aminoacyl-tRNA synthetase</keyword>
<keyword id="KW-0067">ATP-binding</keyword>
<keyword id="KW-0963">Cytoplasm</keyword>
<keyword id="KW-0436">Ligase</keyword>
<keyword id="KW-0479">Metal-binding</keyword>
<keyword id="KW-0547">Nucleotide-binding</keyword>
<keyword id="KW-0648">Protein biosynthesis</keyword>
<keyword id="KW-0694">RNA-binding</keyword>
<keyword id="KW-0820">tRNA-binding</keyword>
<keyword id="KW-0862">Zinc</keyword>